<gene>
    <name type="primary">cdtB</name>
</gene>
<proteinExistence type="evidence at protein level"/>
<feature type="signal peptide" evidence="1">
    <location>
        <begin position="1"/>
        <end position="18"/>
    </location>
</feature>
<feature type="chain" id="PRO_0000013373" description="Cytolethal distending toxin subunit B">
    <location>
        <begin position="19"/>
        <end position="269"/>
    </location>
</feature>
<feature type="short sequence motif" description="Nuclear localization signal">
    <location>
        <begin position="195"/>
        <end position="210"/>
    </location>
</feature>
<feature type="mutagenesis site" description="When the mutant protein is introduced in HeLa cells, it does not result in cell cycle arrest. Devoid of DNA-nicking/DNase activity." evidence="2 3">
    <original>H</original>
    <variation>A</variation>
    <location>
        <position position="154"/>
    </location>
</feature>
<feature type="mutagenesis site" description="Loss of DNase activity, no cellular distension, no G2/M cell cycle arrest." evidence="2">
    <original>D</original>
    <variation>A</variation>
    <location>
        <position position="229"/>
    </location>
</feature>
<feature type="mutagenesis site" description="Loss of DNase activity, no cellular distension, no G2/M cell cycle arrest." evidence="2">
    <original>D</original>
    <variation>R</variation>
    <location>
        <position position="260"/>
    </location>
</feature>
<feature type="mutagenesis site" description="Loss of DNase activity, no cellular distension, no G2/M cell cycle arrest." evidence="2">
    <original>H</original>
    <variation>A</variation>
    <location>
        <position position="261"/>
    </location>
</feature>
<feature type="helix" evidence="5">
    <location>
        <begin position="20"/>
        <end position="22"/>
    </location>
</feature>
<feature type="strand" evidence="5">
    <location>
        <begin position="25"/>
        <end position="32"/>
    </location>
</feature>
<feature type="helix" evidence="5">
    <location>
        <begin position="38"/>
        <end position="42"/>
    </location>
</feature>
<feature type="helix" evidence="5">
    <location>
        <begin position="44"/>
        <end position="49"/>
    </location>
</feature>
<feature type="strand" evidence="5">
    <location>
        <begin position="56"/>
        <end position="63"/>
    </location>
</feature>
<feature type="strand" evidence="5">
    <location>
        <begin position="85"/>
        <end position="90"/>
    </location>
</feature>
<feature type="strand" evidence="5">
    <location>
        <begin position="93"/>
        <end position="97"/>
    </location>
</feature>
<feature type="strand" evidence="5">
    <location>
        <begin position="99"/>
        <end position="105"/>
    </location>
</feature>
<feature type="strand" evidence="5">
    <location>
        <begin position="109"/>
        <end position="111"/>
    </location>
</feature>
<feature type="strand" evidence="5">
    <location>
        <begin position="116"/>
        <end position="122"/>
    </location>
</feature>
<feature type="strand" evidence="5">
    <location>
        <begin position="125"/>
        <end position="130"/>
    </location>
</feature>
<feature type="strand" evidence="5">
    <location>
        <begin position="140"/>
        <end position="145"/>
    </location>
</feature>
<feature type="strand" evidence="5">
    <location>
        <begin position="148"/>
        <end position="154"/>
    </location>
</feature>
<feature type="strand" evidence="5">
    <location>
        <begin position="157"/>
        <end position="160"/>
    </location>
</feature>
<feature type="helix" evidence="5">
    <location>
        <begin position="163"/>
        <end position="175"/>
    </location>
</feature>
<feature type="helix" evidence="5">
    <location>
        <begin position="180"/>
        <end position="183"/>
    </location>
</feature>
<feature type="strand" evidence="5">
    <location>
        <begin position="186"/>
        <end position="192"/>
    </location>
</feature>
<feature type="helix" evidence="5">
    <location>
        <begin position="197"/>
        <end position="201"/>
    </location>
</feature>
<feature type="helix" evidence="5">
    <location>
        <begin position="206"/>
        <end position="210"/>
    </location>
</feature>
<feature type="strand" evidence="5">
    <location>
        <begin position="212"/>
        <end position="215"/>
    </location>
</feature>
<feature type="strand" evidence="5">
    <location>
        <begin position="229"/>
        <end position="237"/>
    </location>
</feature>
<feature type="strand" evidence="5">
    <location>
        <begin position="245"/>
        <end position="248"/>
    </location>
</feature>
<feature type="turn" evidence="5">
    <location>
        <begin position="249"/>
        <end position="252"/>
    </location>
</feature>
<feature type="strand" evidence="5">
    <location>
        <begin position="264"/>
        <end position="267"/>
    </location>
</feature>
<sequence>MKKYIISLIVFLSFYAQADLTDFRVATWNLQGASATTESKWNINVRQLISGENAVDILAVQEAGSPPSTAVDTGTLIPSPGIPVRELIWNLSTNSRPQQVYIYFSAVDALGGRVNLALVSNRRADEVFVLSPVRQGGRPLLGIRIGNDAFFTAHAIAMRNNDAPALVEEVYNFFRDSRDPVHQALNWMILGDFNREPADLEMNLTVPVRRASEIISPAAATQTSQRTLDYAVAGNSVAFRPSPLQAGIVYGARRTQISSDHFPVGVSRR</sequence>
<evidence type="ECO:0000255" key="1"/>
<evidence type="ECO:0000269" key="2">
    <source>
    </source>
</evidence>
<evidence type="ECO:0000269" key="3">
    <source>
    </source>
</evidence>
<evidence type="ECO:0000269" key="4">
    <source>
    </source>
</evidence>
<evidence type="ECO:0007829" key="5">
    <source>
        <dbReference type="PDB" id="2F1N"/>
    </source>
</evidence>
<keyword id="KW-0002">3D-structure</keyword>
<keyword id="KW-0255">Endonuclease</keyword>
<keyword id="KW-0378">Hydrolase</keyword>
<keyword id="KW-0540">Nuclease</keyword>
<keyword id="KW-0964">Secreted</keyword>
<keyword id="KW-0732">Signal</keyword>
<keyword id="KW-0800">Toxin</keyword>
<keyword id="KW-0843">Virulence</keyword>
<accession>Q46669</accession>
<dbReference type="EC" id="3.1.-.-"/>
<dbReference type="EMBL" id="U04208">
    <property type="protein sequence ID" value="AAA18786.1"/>
    <property type="molecule type" value="Unassigned_DNA"/>
</dbReference>
<dbReference type="PIR" id="I69095">
    <property type="entry name" value="I69095"/>
</dbReference>
<dbReference type="PDB" id="2F1N">
    <property type="method" value="X-ray"/>
    <property type="resolution" value="1.73 A"/>
    <property type="chains" value="A=19-269"/>
</dbReference>
<dbReference type="PDBsum" id="2F1N"/>
<dbReference type="BMRB" id="Q46669"/>
<dbReference type="SMR" id="Q46669"/>
<dbReference type="TCDB" id="1.C.98.1.1">
    <property type="family name" value="the cytolethal distending toxin (cdt) family"/>
</dbReference>
<dbReference type="EvolutionaryTrace" id="Q46669"/>
<dbReference type="GO" id="GO:0005576">
    <property type="term" value="C:extracellular region"/>
    <property type="evidence" value="ECO:0007669"/>
    <property type="project" value="UniProtKB-SubCell"/>
</dbReference>
<dbReference type="GO" id="GO:0004519">
    <property type="term" value="F:endonuclease activity"/>
    <property type="evidence" value="ECO:0007669"/>
    <property type="project" value="UniProtKB-KW"/>
</dbReference>
<dbReference type="GO" id="GO:0090729">
    <property type="term" value="F:toxin activity"/>
    <property type="evidence" value="ECO:0007669"/>
    <property type="project" value="UniProtKB-KW"/>
</dbReference>
<dbReference type="CDD" id="cd09081">
    <property type="entry name" value="CdtB"/>
    <property type="match status" value="1"/>
</dbReference>
<dbReference type="Gene3D" id="3.60.10.10">
    <property type="entry name" value="Endonuclease/exonuclease/phosphatase"/>
    <property type="match status" value="1"/>
</dbReference>
<dbReference type="InterPro" id="IPR003539">
    <property type="entry name" value="CD_toxinB"/>
</dbReference>
<dbReference type="InterPro" id="IPR036691">
    <property type="entry name" value="Endo/exonu/phosph_ase_sf"/>
</dbReference>
<dbReference type="InterPro" id="IPR005135">
    <property type="entry name" value="Endo/exonuclease/phosphatase"/>
</dbReference>
<dbReference type="NCBIfam" id="NF011787">
    <property type="entry name" value="PRK15251.1"/>
    <property type="match status" value="1"/>
</dbReference>
<dbReference type="Pfam" id="PF03372">
    <property type="entry name" value="Exo_endo_phos"/>
    <property type="match status" value="1"/>
</dbReference>
<dbReference type="PIRSF" id="PIRSF018539">
    <property type="entry name" value="CDT_B"/>
    <property type="match status" value="1"/>
</dbReference>
<dbReference type="PRINTS" id="PR01388">
    <property type="entry name" value="CDTOXINB"/>
</dbReference>
<dbReference type="SUPFAM" id="SSF56219">
    <property type="entry name" value="DNase I-like"/>
    <property type="match status" value="1"/>
</dbReference>
<organism>
    <name type="scientific">Escherichia coli</name>
    <dbReference type="NCBI Taxonomy" id="562"/>
    <lineage>
        <taxon>Bacteria</taxon>
        <taxon>Pseudomonadati</taxon>
        <taxon>Pseudomonadota</taxon>
        <taxon>Gammaproteobacteria</taxon>
        <taxon>Enterobacterales</taxon>
        <taxon>Enterobacteriaceae</taxon>
        <taxon>Escherichia</taxon>
    </lineage>
</organism>
<protein>
    <recommendedName>
        <fullName>Cytolethal distending toxin subunit B</fullName>
        <shortName>CDT B</shortName>
    </recommendedName>
    <alternativeName>
        <fullName>Deoxyribonuclease CdtB</fullName>
        <ecNumber>3.1.-.-</ecNumber>
    </alternativeName>
</protein>
<name>CDTB_ECOLX</name>
<comment type="function">
    <text evidence="3">Part of the tripartite complex that is required for the CDT activity. CdtB exhibits a DNA-nicking endonuclease activity, and very probably causes DNA damage in intoxicated cells. This damage induces G2/M cell cycle arrest, chromatin fragmentation, cell distention and nucleus enlargement.</text>
</comment>
<comment type="subunit">
    <text>Heterotrimer of 3 subunits, CdtA, CdtB and CdtC.</text>
</comment>
<comment type="subcellular location">
    <subcellularLocation>
        <location evidence="4">Secreted</location>
    </subcellularLocation>
    <text>Localized to the nucleus of the infected cells.</text>
</comment>
<comment type="miscellaneous">
    <text>The operon of the strain O128:H- / 9142-88 / EPEC is referred to as cdt type II (CDT-II).</text>
</comment>
<reference key="1">
    <citation type="journal article" date="1994" name="Infect. Immun.">
        <title>Cloning, sequencing, and expression of the Escherichia coli cytolethal distending toxin genes.</title>
        <authorList>
            <person name="Pickett C.L."/>
            <person name="Cottle D.L."/>
            <person name="Pesci E.C."/>
            <person name="Bikah G."/>
        </authorList>
    </citation>
    <scope>NUCLEOTIDE SEQUENCE [GENOMIC DNA]</scope>
    <source>
        <strain>O128:H- / 9142-88 / EPEC</strain>
    </source>
</reference>
<reference key="2">
    <citation type="journal article" date="2001" name="Infect. Immun.">
        <title>Escherichia coli CdtB mediates cytolethal distending toxin cell cycle arrest.</title>
        <authorList>
            <person name="Elwell C.A."/>
            <person name="Chao K."/>
            <person name="Patel K."/>
            <person name="Dreyfus L.A."/>
        </authorList>
    </citation>
    <scope>FUNCTION</scope>
    <scope>MUTAGENESIS OF HIS-154</scope>
</reference>
<reference key="3">
    <citation type="journal article" date="2000" name="Mol. Microbiol.">
        <title>DNase I homologous residues in CdtB are critical for cytolethal distending toxin-mediated cell cycle arrest.</title>
        <authorList>
            <person name="Elwell C.A."/>
            <person name="Dreyfus L.A."/>
        </authorList>
    </citation>
    <scope>MUTAGENESIS OF HIS-154; ASP-229; ASP-260 AND HIS-261</scope>
</reference>
<reference key="4">
    <citation type="journal article" date="2004" name="Cell. Microbiol.">
        <title>Nuclear localization of the Escherichia coli cytolethal distending toxin CdtB subunit.</title>
        <authorList>
            <person name="McSweeney L.A."/>
            <person name="Dreyfus L.A."/>
        </authorList>
    </citation>
    <scope>SUBCELLULAR LOCATION</scope>
    <scope>IDENTIFICATION OF THE NUCLEAR LOCALIZATION SIGNAL</scope>
</reference>
<reference key="5">
    <citation type="journal article" date="2006" name="J. Biol. Chem.">
        <title>Differences in crystal and solution structures of the cytolethal distending toxin B subunit: Relevance to nuclear translocation and functional activation.</title>
        <authorList>
            <person name="Hontz J.S."/>
            <person name="Villar-Lecumberri M.T."/>
            <person name="Potter B.M."/>
            <person name="Yoder M.D."/>
            <person name="Dreyfus L.A."/>
            <person name="Laity J.H."/>
        </authorList>
    </citation>
    <scope>X-RAY CRYSTALLOGRAPHY (1.73 ANGSTROMS) OF 19-269</scope>
</reference>